<accession>Q4FS54</accession>
<name>ILVD_PSYA2</name>
<sequence length="628" mass="66758">MDYNSKTSTGGRNMAGARALWRATGMTDGDFGKPIIAIANSFTQFVPGHVHLKDLGQMVAREIEKAGGVAKEFNTIAVDDGIAMGHSGMLYSLPSRDLIADSVEYMVNAHCADALVCISNCDKITPGMLMAALRLNIPVVFISGGPMEAGKILASTVGKSHNNEDSSGGAIRKLDLVDAMMDAADDSISDEDVAAIEASACPTCGSCSGMFTANSMNCLTEALGLALPGNGSLLATHSLRRELFLEAGRTIVSLAKRRYEQDDDSVLPRSIATKAAFENAMTLDIAMGGSTNTILHLLAAANEAEVDFKMHDIDRLSRGVPCLAKVAPASQKYHMEDVHRAGGVFALLAELDRAGLLNTDLPTIHSATMKEAIDKWDIMNPDNLEARARYIAAPGGVRTTEAFSQSKEWSNLDVNRESGCIRSAQHAYSEDGGLAVLYGNIAERGCVVKTAGVDDSILVFTGRARIFESQDDAVAAVLDDQIVAGDVVIIRFEGPKGGPGMQEMLYPTTYLKSKGLGKECALLTDGRFSGGTSGLSIGHASPEAAEGGAIGLVQEGDTIHIDIPNRTINMQVSDEELAARREEMDSRGRDAWKPVSRDRHVSPALRAYAAMTTSADTGAVRDVSQVER</sequence>
<gene>
    <name evidence="1" type="primary">ilvD</name>
    <name type="ordered locus">Psyc_1304</name>
</gene>
<dbReference type="EC" id="4.2.1.9" evidence="1"/>
<dbReference type="EMBL" id="CP000082">
    <property type="protein sequence ID" value="AAZ19154.1"/>
    <property type="molecule type" value="Genomic_DNA"/>
</dbReference>
<dbReference type="RefSeq" id="WP_011280576.1">
    <property type="nucleotide sequence ID" value="NC_007204.1"/>
</dbReference>
<dbReference type="SMR" id="Q4FS54"/>
<dbReference type="STRING" id="259536.Psyc_1304"/>
<dbReference type="KEGG" id="par:Psyc_1304"/>
<dbReference type="eggNOG" id="COG0129">
    <property type="taxonomic scope" value="Bacteria"/>
</dbReference>
<dbReference type="HOGENOM" id="CLU_014271_4_2_6"/>
<dbReference type="OrthoDB" id="9807077at2"/>
<dbReference type="UniPathway" id="UPA00047">
    <property type="reaction ID" value="UER00057"/>
</dbReference>
<dbReference type="UniPathway" id="UPA00049">
    <property type="reaction ID" value="UER00061"/>
</dbReference>
<dbReference type="Proteomes" id="UP000000546">
    <property type="component" value="Chromosome"/>
</dbReference>
<dbReference type="GO" id="GO:0005829">
    <property type="term" value="C:cytosol"/>
    <property type="evidence" value="ECO:0007669"/>
    <property type="project" value="TreeGrafter"/>
</dbReference>
<dbReference type="GO" id="GO:0051537">
    <property type="term" value="F:2 iron, 2 sulfur cluster binding"/>
    <property type="evidence" value="ECO:0007669"/>
    <property type="project" value="UniProtKB-UniRule"/>
</dbReference>
<dbReference type="GO" id="GO:0004160">
    <property type="term" value="F:dihydroxy-acid dehydratase activity"/>
    <property type="evidence" value="ECO:0007669"/>
    <property type="project" value="UniProtKB-UniRule"/>
</dbReference>
<dbReference type="GO" id="GO:0000287">
    <property type="term" value="F:magnesium ion binding"/>
    <property type="evidence" value="ECO:0007669"/>
    <property type="project" value="UniProtKB-UniRule"/>
</dbReference>
<dbReference type="GO" id="GO:0009097">
    <property type="term" value="P:isoleucine biosynthetic process"/>
    <property type="evidence" value="ECO:0007669"/>
    <property type="project" value="UniProtKB-UniRule"/>
</dbReference>
<dbReference type="GO" id="GO:0009099">
    <property type="term" value="P:L-valine biosynthetic process"/>
    <property type="evidence" value="ECO:0007669"/>
    <property type="project" value="UniProtKB-UniRule"/>
</dbReference>
<dbReference type="FunFam" id="3.50.30.80:FF:000001">
    <property type="entry name" value="Dihydroxy-acid dehydratase"/>
    <property type="match status" value="1"/>
</dbReference>
<dbReference type="Gene3D" id="3.50.30.80">
    <property type="entry name" value="IlvD/EDD C-terminal domain-like"/>
    <property type="match status" value="1"/>
</dbReference>
<dbReference type="HAMAP" id="MF_00012">
    <property type="entry name" value="IlvD"/>
    <property type="match status" value="1"/>
</dbReference>
<dbReference type="InterPro" id="IPR042096">
    <property type="entry name" value="Dihydro-acid_dehy_C"/>
</dbReference>
<dbReference type="InterPro" id="IPR004404">
    <property type="entry name" value="DihydroxyA_deHydtase"/>
</dbReference>
<dbReference type="InterPro" id="IPR020558">
    <property type="entry name" value="DiOHA_6PGluconate_deHydtase_CS"/>
</dbReference>
<dbReference type="InterPro" id="IPR056740">
    <property type="entry name" value="ILV_EDD_C"/>
</dbReference>
<dbReference type="InterPro" id="IPR000581">
    <property type="entry name" value="ILV_EDD_N"/>
</dbReference>
<dbReference type="InterPro" id="IPR037237">
    <property type="entry name" value="IlvD/EDD_N"/>
</dbReference>
<dbReference type="NCBIfam" id="TIGR00110">
    <property type="entry name" value="ilvD"/>
    <property type="match status" value="1"/>
</dbReference>
<dbReference type="NCBIfam" id="NF009103">
    <property type="entry name" value="PRK12448.1"/>
    <property type="match status" value="1"/>
</dbReference>
<dbReference type="PANTHER" id="PTHR43661">
    <property type="entry name" value="D-XYLONATE DEHYDRATASE"/>
    <property type="match status" value="1"/>
</dbReference>
<dbReference type="PANTHER" id="PTHR43661:SF3">
    <property type="entry name" value="D-XYLONATE DEHYDRATASE YAGF-RELATED"/>
    <property type="match status" value="1"/>
</dbReference>
<dbReference type="Pfam" id="PF24877">
    <property type="entry name" value="ILV_EDD_C"/>
    <property type="match status" value="1"/>
</dbReference>
<dbReference type="Pfam" id="PF00920">
    <property type="entry name" value="ILVD_EDD_N"/>
    <property type="match status" value="1"/>
</dbReference>
<dbReference type="SUPFAM" id="SSF143975">
    <property type="entry name" value="IlvD/EDD N-terminal domain-like"/>
    <property type="match status" value="1"/>
</dbReference>
<dbReference type="SUPFAM" id="SSF52016">
    <property type="entry name" value="LeuD/IlvD-like"/>
    <property type="match status" value="1"/>
</dbReference>
<dbReference type="PROSITE" id="PS00886">
    <property type="entry name" value="ILVD_EDD_1"/>
    <property type="match status" value="1"/>
</dbReference>
<dbReference type="PROSITE" id="PS00887">
    <property type="entry name" value="ILVD_EDD_2"/>
    <property type="match status" value="1"/>
</dbReference>
<reference key="1">
    <citation type="journal article" date="2010" name="Appl. Environ. Microbiol.">
        <title>The genome sequence of Psychrobacter arcticus 273-4, a psychroactive Siberian permafrost bacterium, reveals mechanisms for adaptation to low-temperature growth.</title>
        <authorList>
            <person name="Ayala-del-Rio H.L."/>
            <person name="Chain P.S."/>
            <person name="Grzymski J.J."/>
            <person name="Ponder M.A."/>
            <person name="Ivanova N."/>
            <person name="Bergholz P.W."/>
            <person name="Di Bartolo G."/>
            <person name="Hauser L."/>
            <person name="Land M."/>
            <person name="Bakermans C."/>
            <person name="Rodrigues D."/>
            <person name="Klappenbach J."/>
            <person name="Zarka D."/>
            <person name="Larimer F."/>
            <person name="Richardson P."/>
            <person name="Murray A."/>
            <person name="Thomashow M."/>
            <person name="Tiedje J.M."/>
        </authorList>
    </citation>
    <scope>NUCLEOTIDE SEQUENCE [LARGE SCALE GENOMIC DNA]</scope>
    <source>
        <strain>DSM 17307 / VKM B-2377 / 273-4</strain>
    </source>
</reference>
<protein>
    <recommendedName>
        <fullName evidence="1">Dihydroxy-acid dehydratase</fullName>
        <shortName evidence="1">DAD</shortName>
        <ecNumber evidence="1">4.2.1.9</ecNumber>
    </recommendedName>
</protein>
<keyword id="KW-0001">2Fe-2S</keyword>
<keyword id="KW-0028">Amino-acid biosynthesis</keyword>
<keyword id="KW-0100">Branched-chain amino acid biosynthesis</keyword>
<keyword id="KW-0408">Iron</keyword>
<keyword id="KW-0411">Iron-sulfur</keyword>
<keyword id="KW-0456">Lyase</keyword>
<keyword id="KW-0460">Magnesium</keyword>
<keyword id="KW-0479">Metal-binding</keyword>
<keyword id="KW-1185">Reference proteome</keyword>
<evidence type="ECO:0000255" key="1">
    <source>
        <dbReference type="HAMAP-Rule" id="MF_00012"/>
    </source>
</evidence>
<comment type="function">
    <text evidence="1">Functions in the biosynthesis of branched-chain amino acids. Catalyzes the dehydration of (2R,3R)-2,3-dihydroxy-3-methylpentanoate (2,3-dihydroxy-3-methylvalerate) into 2-oxo-3-methylpentanoate (2-oxo-3-methylvalerate) and of (2R)-2,3-dihydroxy-3-methylbutanoate (2,3-dihydroxyisovalerate) into 2-oxo-3-methylbutanoate (2-oxoisovalerate), the penultimate precursor to L-isoleucine and L-valine, respectively.</text>
</comment>
<comment type="catalytic activity">
    <reaction evidence="1">
        <text>(2R)-2,3-dihydroxy-3-methylbutanoate = 3-methyl-2-oxobutanoate + H2O</text>
        <dbReference type="Rhea" id="RHEA:24809"/>
        <dbReference type="ChEBI" id="CHEBI:11851"/>
        <dbReference type="ChEBI" id="CHEBI:15377"/>
        <dbReference type="ChEBI" id="CHEBI:49072"/>
        <dbReference type="EC" id="4.2.1.9"/>
    </reaction>
    <physiologicalReaction direction="left-to-right" evidence="1">
        <dbReference type="Rhea" id="RHEA:24810"/>
    </physiologicalReaction>
</comment>
<comment type="catalytic activity">
    <reaction evidence="1">
        <text>(2R,3R)-2,3-dihydroxy-3-methylpentanoate = (S)-3-methyl-2-oxopentanoate + H2O</text>
        <dbReference type="Rhea" id="RHEA:27694"/>
        <dbReference type="ChEBI" id="CHEBI:15377"/>
        <dbReference type="ChEBI" id="CHEBI:35146"/>
        <dbReference type="ChEBI" id="CHEBI:49258"/>
        <dbReference type="EC" id="4.2.1.9"/>
    </reaction>
    <physiologicalReaction direction="left-to-right" evidence="1">
        <dbReference type="Rhea" id="RHEA:27695"/>
    </physiologicalReaction>
</comment>
<comment type="cofactor">
    <cofactor evidence="1">
        <name>[2Fe-2S] cluster</name>
        <dbReference type="ChEBI" id="CHEBI:190135"/>
    </cofactor>
    <text evidence="1">Binds 1 [2Fe-2S] cluster per subunit. This cluster acts as a Lewis acid cofactor.</text>
</comment>
<comment type="cofactor">
    <cofactor evidence="1">
        <name>Mg(2+)</name>
        <dbReference type="ChEBI" id="CHEBI:18420"/>
    </cofactor>
</comment>
<comment type="pathway">
    <text evidence="1">Amino-acid biosynthesis; L-isoleucine biosynthesis; L-isoleucine from 2-oxobutanoate: step 3/4.</text>
</comment>
<comment type="pathway">
    <text evidence="1">Amino-acid biosynthesis; L-valine biosynthesis; L-valine from pyruvate: step 3/4.</text>
</comment>
<comment type="subunit">
    <text evidence="1">Homodimer.</text>
</comment>
<comment type="similarity">
    <text evidence="1">Belongs to the IlvD/Edd family.</text>
</comment>
<organism>
    <name type="scientific">Psychrobacter arcticus (strain DSM 17307 / VKM B-2377 / 273-4)</name>
    <dbReference type="NCBI Taxonomy" id="259536"/>
    <lineage>
        <taxon>Bacteria</taxon>
        <taxon>Pseudomonadati</taxon>
        <taxon>Pseudomonadota</taxon>
        <taxon>Gammaproteobacteria</taxon>
        <taxon>Moraxellales</taxon>
        <taxon>Moraxellaceae</taxon>
        <taxon>Psychrobacter</taxon>
    </lineage>
</organism>
<proteinExistence type="inferred from homology"/>
<feature type="chain" id="PRO_0000225414" description="Dihydroxy-acid dehydratase">
    <location>
        <begin position="1"/>
        <end position="628"/>
    </location>
</feature>
<feature type="active site" description="Proton acceptor" evidence="1">
    <location>
        <position position="529"/>
    </location>
</feature>
<feature type="binding site" evidence="1">
    <location>
        <position position="80"/>
    </location>
    <ligand>
        <name>Mg(2+)</name>
        <dbReference type="ChEBI" id="CHEBI:18420"/>
    </ligand>
</feature>
<feature type="binding site" evidence="1">
    <location>
        <position position="121"/>
    </location>
    <ligand>
        <name>[2Fe-2S] cluster</name>
        <dbReference type="ChEBI" id="CHEBI:190135"/>
    </ligand>
</feature>
<feature type="binding site" evidence="1">
    <location>
        <position position="122"/>
    </location>
    <ligand>
        <name>Mg(2+)</name>
        <dbReference type="ChEBI" id="CHEBI:18420"/>
    </ligand>
</feature>
<feature type="binding site" description="via carbamate group" evidence="1">
    <location>
        <position position="123"/>
    </location>
    <ligand>
        <name>Mg(2+)</name>
        <dbReference type="ChEBI" id="CHEBI:18420"/>
    </ligand>
</feature>
<feature type="binding site" evidence="1">
    <location>
        <position position="207"/>
    </location>
    <ligand>
        <name>[2Fe-2S] cluster</name>
        <dbReference type="ChEBI" id="CHEBI:190135"/>
    </ligand>
</feature>
<feature type="binding site" evidence="1">
    <location>
        <position position="503"/>
    </location>
    <ligand>
        <name>Mg(2+)</name>
        <dbReference type="ChEBI" id="CHEBI:18420"/>
    </ligand>
</feature>
<feature type="modified residue" description="N6-carboxylysine" evidence="1">
    <location>
        <position position="123"/>
    </location>
</feature>